<evidence type="ECO:0000250" key="1"/>
<evidence type="ECO:0000255" key="2"/>
<evidence type="ECO:0000256" key="3">
    <source>
        <dbReference type="SAM" id="MobiDB-lite"/>
    </source>
</evidence>
<evidence type="ECO:0000269" key="4">
    <source>
    </source>
</evidence>
<evidence type="ECO:0000305" key="5"/>
<organism>
    <name type="scientific">Emericella nidulans (strain FGSC A4 / ATCC 38163 / CBS 112.46 / NRRL 194 / M139)</name>
    <name type="common">Aspergillus nidulans</name>
    <dbReference type="NCBI Taxonomy" id="227321"/>
    <lineage>
        <taxon>Eukaryota</taxon>
        <taxon>Fungi</taxon>
        <taxon>Dikarya</taxon>
        <taxon>Ascomycota</taxon>
        <taxon>Pezizomycotina</taxon>
        <taxon>Eurotiomycetes</taxon>
        <taxon>Eurotiomycetidae</taxon>
        <taxon>Eurotiales</taxon>
        <taxon>Aspergillaceae</taxon>
        <taxon>Aspergillus</taxon>
        <taxon>Aspergillus subgen. Nidulantes</taxon>
    </lineage>
</organism>
<proteinExistence type="inferred from homology"/>
<reference key="1">
    <citation type="journal article" date="1998" name="DNA Seq.">
        <title>Sequencing of a gene encoding a member of the mitochondrial carrier family of transport proteins from Aspergillus nidulans.</title>
        <authorList>
            <person name="Sun J."/>
            <person name="Rhodes J.C."/>
            <person name="Askew D.S."/>
        </authorList>
    </citation>
    <scope>NUCLEOTIDE SEQUENCE [GENOMIC DNA]</scope>
    <source>
        <strain>FGSC A4 / ATCC 38163 / CBS 112.46 / NRRL 194 / M139</strain>
    </source>
</reference>
<reference key="2">
    <citation type="journal article" date="2001" name="Curr. Microbiol.">
        <title>Molecular cloning of cgrA, the gene encoding the Aspergillus nidulans ortholog of Saccharomyces cerevisiae CGR1.</title>
        <authorList>
            <person name="Sun J."/>
            <person name="Boettner D."/>
            <person name="Huebner N."/>
            <person name="Xu F."/>
            <person name="Rhodes J.C."/>
            <person name="Askew D.S."/>
        </authorList>
    </citation>
    <scope>NUCLEOTIDE SEQUENCE [MRNA]</scope>
    <scope>FUNCTION</scope>
    <scope>SUBCELLULAR LOCATION</scope>
</reference>
<reference key="3">
    <citation type="journal article" date="2005" name="Nature">
        <title>Sequencing of Aspergillus nidulans and comparative analysis with A. fumigatus and A. oryzae.</title>
        <authorList>
            <person name="Galagan J.E."/>
            <person name="Calvo S.E."/>
            <person name="Cuomo C."/>
            <person name="Ma L.-J."/>
            <person name="Wortman J.R."/>
            <person name="Batzoglou S."/>
            <person name="Lee S.-I."/>
            <person name="Bastuerkmen M."/>
            <person name="Spevak C.C."/>
            <person name="Clutterbuck J."/>
            <person name="Kapitonov V."/>
            <person name="Jurka J."/>
            <person name="Scazzocchio C."/>
            <person name="Farman M.L."/>
            <person name="Butler J."/>
            <person name="Purcell S."/>
            <person name="Harris S."/>
            <person name="Braus G.H."/>
            <person name="Draht O."/>
            <person name="Busch S."/>
            <person name="D'Enfert C."/>
            <person name="Bouchier C."/>
            <person name="Goldman G.H."/>
            <person name="Bell-Pedersen D."/>
            <person name="Griffiths-Jones S."/>
            <person name="Doonan J.H."/>
            <person name="Yu J."/>
            <person name="Vienken K."/>
            <person name="Pain A."/>
            <person name="Freitag M."/>
            <person name="Selker E.U."/>
            <person name="Archer D.B."/>
            <person name="Penalva M.A."/>
            <person name="Oakley B.R."/>
            <person name="Momany M."/>
            <person name="Tanaka T."/>
            <person name="Kumagai T."/>
            <person name="Asai K."/>
            <person name="Machida M."/>
            <person name="Nierman W.C."/>
            <person name="Denning D.W."/>
            <person name="Caddick M.X."/>
            <person name="Hynes M."/>
            <person name="Paoletti M."/>
            <person name="Fischer R."/>
            <person name="Miller B.L."/>
            <person name="Dyer P.S."/>
            <person name="Sachs M.S."/>
            <person name="Osmani S.A."/>
            <person name="Birren B.W."/>
        </authorList>
    </citation>
    <scope>NUCLEOTIDE SEQUENCE [LARGE SCALE GENOMIC DNA]</scope>
    <source>
        <strain>FGSC A4 / ATCC 38163 / CBS 112.46 / NRRL 194 / M139</strain>
    </source>
</reference>
<reference key="4">
    <citation type="journal article" date="2009" name="Fungal Genet. Biol.">
        <title>The 2008 update of the Aspergillus nidulans genome annotation: a community effort.</title>
        <authorList>
            <person name="Wortman J.R."/>
            <person name="Gilsenan J.M."/>
            <person name="Joardar V."/>
            <person name="Deegan J."/>
            <person name="Clutterbuck J."/>
            <person name="Andersen M.R."/>
            <person name="Archer D."/>
            <person name="Bencina M."/>
            <person name="Braus G."/>
            <person name="Coutinho P."/>
            <person name="von Dohren H."/>
            <person name="Doonan J."/>
            <person name="Driessen A.J."/>
            <person name="Durek P."/>
            <person name="Espeso E."/>
            <person name="Fekete E."/>
            <person name="Flipphi M."/>
            <person name="Estrada C.G."/>
            <person name="Geysens S."/>
            <person name="Goldman G."/>
            <person name="de Groot P.W."/>
            <person name="Hansen K."/>
            <person name="Harris S.D."/>
            <person name="Heinekamp T."/>
            <person name="Helmstaedt K."/>
            <person name="Henrissat B."/>
            <person name="Hofmann G."/>
            <person name="Homan T."/>
            <person name="Horio T."/>
            <person name="Horiuchi H."/>
            <person name="James S."/>
            <person name="Jones M."/>
            <person name="Karaffa L."/>
            <person name="Karanyi Z."/>
            <person name="Kato M."/>
            <person name="Keller N."/>
            <person name="Kelly D.E."/>
            <person name="Kiel J.A."/>
            <person name="Kim J.M."/>
            <person name="van der Klei I.J."/>
            <person name="Klis F.M."/>
            <person name="Kovalchuk A."/>
            <person name="Krasevec N."/>
            <person name="Kubicek C.P."/>
            <person name="Liu B."/>
            <person name="Maccabe A."/>
            <person name="Meyer V."/>
            <person name="Mirabito P."/>
            <person name="Miskei M."/>
            <person name="Mos M."/>
            <person name="Mullins J."/>
            <person name="Nelson D.R."/>
            <person name="Nielsen J."/>
            <person name="Oakley B.R."/>
            <person name="Osmani S.A."/>
            <person name="Pakula T."/>
            <person name="Paszewski A."/>
            <person name="Paulsen I."/>
            <person name="Pilsyk S."/>
            <person name="Pocsi I."/>
            <person name="Punt P.J."/>
            <person name="Ram A.F."/>
            <person name="Ren Q."/>
            <person name="Robellet X."/>
            <person name="Robson G."/>
            <person name="Seiboth B."/>
            <person name="van Solingen P."/>
            <person name="Specht T."/>
            <person name="Sun J."/>
            <person name="Taheri-Talesh N."/>
            <person name="Takeshita N."/>
            <person name="Ussery D."/>
            <person name="vanKuyk P.A."/>
            <person name="Visser H."/>
            <person name="van de Vondervoort P.J."/>
            <person name="de Vries R.P."/>
            <person name="Walton J."/>
            <person name="Xiang X."/>
            <person name="Xiong Y."/>
            <person name="Zeng A.P."/>
            <person name="Brandt B.W."/>
            <person name="Cornell M.J."/>
            <person name="van den Hondel C.A."/>
            <person name="Visser J."/>
            <person name="Oliver S.G."/>
            <person name="Turner G."/>
        </authorList>
    </citation>
    <scope>GENOME REANNOTATION</scope>
    <source>
        <strain>FGSC A4 / ATCC 38163 / CBS 112.46 / NRRL 194 / M139</strain>
    </source>
</reference>
<sequence>MSSAAPAPSTHAAKSIRKNGKNWHDNKKPFRPNGGLTSYTKRAAARKEQEAIKEYEKELREEREAERQAHIQRIKERRAAKEEKERYEKMAEKMHRKRVERLKKREKRNKLLNS</sequence>
<name>CGR1_EMENI</name>
<keyword id="KW-0175">Coiled coil</keyword>
<keyword id="KW-0539">Nucleus</keyword>
<keyword id="KW-1185">Reference proteome</keyword>
<keyword id="KW-0690">Ribosome biogenesis</keyword>
<keyword id="KW-0698">rRNA processing</keyword>
<feature type="chain" id="PRO_0000278955" description="rRNA-processing protein cgrA">
    <location>
        <begin position="1"/>
        <end position="114"/>
    </location>
</feature>
<feature type="region of interest" description="Disordered" evidence="3">
    <location>
        <begin position="1"/>
        <end position="47"/>
    </location>
</feature>
<feature type="region of interest" description="Disordered" evidence="3">
    <location>
        <begin position="77"/>
        <end position="114"/>
    </location>
</feature>
<feature type="coiled-coil region" evidence="2">
    <location>
        <begin position="40"/>
        <end position="101"/>
    </location>
</feature>
<feature type="compositionally biased region" description="Low complexity" evidence="3">
    <location>
        <begin position="1"/>
        <end position="13"/>
    </location>
</feature>
<feature type="compositionally biased region" description="Basic and acidic residues" evidence="3">
    <location>
        <begin position="77"/>
        <end position="93"/>
    </location>
</feature>
<feature type="compositionally biased region" description="Basic residues" evidence="3">
    <location>
        <begin position="94"/>
        <end position="114"/>
    </location>
</feature>
<comment type="function">
    <text evidence="1 4">Involved in nucleolar integrity and required for processing of the pre-rRNA for the 60S ribosome subunit.</text>
</comment>
<comment type="subcellular location">
    <subcellularLocation>
        <location evidence="1">Nucleus</location>
        <location evidence="1">Nucleolus</location>
    </subcellularLocation>
</comment>
<comment type="similarity">
    <text evidence="5">Belongs to the CGR1 family.</text>
</comment>
<accession>Q9Y708</accession>
<accession>C8VLT9</accession>
<gene>
    <name type="primary">cgrA</name>
    <name type="synonym">cgr1</name>
    <name type="ORF">AN11145</name>
</gene>
<protein>
    <recommendedName>
        <fullName>rRNA-processing protein cgrA</fullName>
    </recommendedName>
</protein>
<dbReference type="EMBL" id="AF146189">
    <property type="protein sequence ID" value="AAD44762.2"/>
    <property type="molecule type" value="Genomic_DNA"/>
</dbReference>
<dbReference type="EMBL" id="AF146190">
    <property type="protein sequence ID" value="AAD44764.2"/>
    <property type="molecule type" value="mRNA"/>
</dbReference>
<dbReference type="EMBL" id="AACD01000164">
    <property type="status" value="NOT_ANNOTATED_CDS"/>
    <property type="molecule type" value="Genomic_DNA"/>
</dbReference>
<dbReference type="EMBL" id="BN001307">
    <property type="protein sequence ID" value="CBF84743.1"/>
    <property type="molecule type" value="Genomic_DNA"/>
</dbReference>
<dbReference type="SMR" id="Q9Y708"/>
<dbReference type="STRING" id="227321.Q9Y708"/>
<dbReference type="EnsemblFungi" id="CBF84743">
    <property type="protein sequence ID" value="CBF84743"/>
    <property type="gene ID" value="ANIA_11145"/>
</dbReference>
<dbReference type="VEuPathDB" id="FungiDB:AN11145"/>
<dbReference type="eggNOG" id="ENOG502S7VB">
    <property type="taxonomic scope" value="Eukaryota"/>
</dbReference>
<dbReference type="HOGENOM" id="CLU_125051_0_0_1"/>
<dbReference type="InParanoid" id="Q9Y708"/>
<dbReference type="OMA" id="NGKQWHD"/>
<dbReference type="OrthoDB" id="3942380at2759"/>
<dbReference type="Proteomes" id="UP000000560">
    <property type="component" value="Chromosome VII"/>
</dbReference>
<dbReference type="GO" id="GO:0005730">
    <property type="term" value="C:nucleolus"/>
    <property type="evidence" value="ECO:0000314"/>
    <property type="project" value="AspGD"/>
</dbReference>
<dbReference type="GO" id="GO:0006364">
    <property type="term" value="P:rRNA processing"/>
    <property type="evidence" value="ECO:0007669"/>
    <property type="project" value="UniProtKB-KW"/>
</dbReference>
<dbReference type="InterPro" id="IPR005579">
    <property type="entry name" value="Cgr1-like"/>
</dbReference>
<dbReference type="Pfam" id="PF03879">
    <property type="entry name" value="Cgr1"/>
    <property type="match status" value="1"/>
</dbReference>